<protein>
    <recommendedName>
        <fullName>5'-3' exoribonuclease 1</fullName>
        <shortName>mXRN1</shortName>
        <ecNumber>3.1.13.-</ecNumber>
    </recommendedName>
    <alternativeName>
        <fullName>Protein Dhm2</fullName>
    </alternativeName>
    <alternativeName>
        <fullName>Strand-exchange protein 1 homolog</fullName>
    </alternativeName>
</protein>
<evidence type="ECO:0000250" key="1">
    <source>
        <dbReference type="UniProtKB" id="Q8IZH2"/>
    </source>
</evidence>
<evidence type="ECO:0000256" key="2">
    <source>
        <dbReference type="SAM" id="MobiDB-lite"/>
    </source>
</evidence>
<evidence type="ECO:0000269" key="3">
    <source>
    </source>
</evidence>
<evidence type="ECO:0000269" key="4">
    <source>
    </source>
</evidence>
<evidence type="ECO:0000269" key="5">
    <source>
    </source>
</evidence>
<evidence type="ECO:0000269" key="6">
    <source>
    </source>
</evidence>
<evidence type="ECO:0000303" key="7">
    <source>
    </source>
</evidence>
<evidence type="ECO:0000303" key="8">
    <source>
    </source>
</evidence>
<evidence type="ECO:0000305" key="9"/>
<evidence type="ECO:0000312" key="10">
    <source>
        <dbReference type="MGI" id="MGI:891964"/>
    </source>
</evidence>
<evidence type="ECO:0007744" key="11">
    <source>
    </source>
</evidence>
<gene>
    <name evidence="10" type="primary">Xrn1</name>
    <name evidence="10" type="synonym">Dhm2</name>
    <name type="synonym">Exo</name>
    <name evidence="1" type="synonym">Sep1</name>
</gene>
<proteinExistence type="evidence at protein level"/>
<comment type="function">
    <text evidence="1 5">Major 5'-3' exoribonuclease involved in mRNA decay. Required for the 5'-3'-processing of the G4 tetraplex-containing DNA and RNA substrates. The kinetic of hydrolysis is faster for G4 RNA tetraplex than for G4 DNA tetraplex and monomeric RNA tetraplex. Binds to RNA and DNA. Plays a role in replication-dependent histone mRNA degradation (By similarity).</text>
</comment>
<comment type="subunit">
    <text evidence="1 3 4">Found in a mRNP complex with UPF1, UPF2, UPF3B and XRN1 (By similarity). Associates with alpha and beta tubulins (PubMed:14580940). Interacts with DIS3L2 (By similarity). Interacts with ZC3HAV1 in an RNA-dependent manner (By similarity). Interacts with ZFP36L1 (By similarity). Interacts with TRIM71 (via NHL repeats) in an RNA-dependent manner (By similarity). Interacts with YTHDC2 (via ANK repeats) (PubMed:29033321). Interacts with DHX34; the interaction is RNA-independent (By similarity).</text>
</comment>
<comment type="subcellular location">
    <subcellularLocation>
        <location evidence="5">Cytoplasm</location>
    </subcellularLocation>
    <text>Discrete foci at the inner surface of the cell membrane.</text>
</comment>
<comment type="alternative products">
    <event type="alternative splicing"/>
    <isoform>
        <id>P97789-1</id>
        <name>1</name>
        <sequence type="displayed"/>
    </isoform>
    <isoform>
        <id>P97789-2</id>
        <name>2</name>
        <sequence type="described" ref="VSP_016697"/>
    </isoform>
    <isoform>
        <id>P97789-3</id>
        <name>3</name>
        <sequence type="described" ref="VSP_016696 VSP_016698"/>
    </isoform>
</comment>
<comment type="tissue specificity">
    <text evidence="3 5 6">Expressed in heart, brain (spinal cord, dorsal root and superior cervical ganglia, neurons of the cerebrum and brain stem), peripheral nerve fibers in the skin and intestine, spleen, lung, liver, skeletal muscle, kidney and testis.</text>
</comment>
<comment type="developmental stage">
    <text evidence="3">Expressed in embryo between 7 and 17 dpc.</text>
</comment>
<comment type="similarity">
    <text evidence="9">Belongs to the 5'-3' exonuclease family.</text>
</comment>
<name>XRN1_MOUSE</name>
<feature type="chain" id="PRO_0000071393" description="5'-3' exoribonuclease 1">
    <location>
        <begin position="1"/>
        <end position="1719"/>
    </location>
</feature>
<feature type="region of interest" description="Disordered" evidence="2">
    <location>
        <begin position="1268"/>
        <end position="1317"/>
    </location>
</feature>
<feature type="region of interest" description="Disordered" evidence="2">
    <location>
        <begin position="1397"/>
        <end position="1445"/>
    </location>
</feature>
<feature type="region of interest" description="Disordered" evidence="2">
    <location>
        <begin position="1634"/>
        <end position="1719"/>
    </location>
</feature>
<feature type="compositionally biased region" description="Basic and acidic residues" evidence="2">
    <location>
        <begin position="1268"/>
        <end position="1298"/>
    </location>
</feature>
<feature type="compositionally biased region" description="Polar residues" evidence="2">
    <location>
        <begin position="1301"/>
        <end position="1314"/>
    </location>
</feature>
<feature type="compositionally biased region" description="Basic and acidic residues" evidence="2">
    <location>
        <begin position="1397"/>
        <end position="1430"/>
    </location>
</feature>
<feature type="compositionally biased region" description="Polar residues" evidence="2">
    <location>
        <begin position="1638"/>
        <end position="1660"/>
    </location>
</feature>
<feature type="compositionally biased region" description="Low complexity" evidence="2">
    <location>
        <begin position="1661"/>
        <end position="1680"/>
    </location>
</feature>
<feature type="compositionally biased region" description="Polar residues" evidence="2">
    <location>
        <begin position="1681"/>
        <end position="1690"/>
    </location>
</feature>
<feature type="modified residue" description="Phosphoserine" evidence="11">
    <location>
        <position position="1382"/>
    </location>
</feature>
<feature type="splice variant" id="VSP_016696" description="In isoform 3." evidence="8">
    <original>P</original>
    <variation>PSKKL</variation>
    <location>
        <position position="1436"/>
    </location>
</feature>
<feature type="splice variant" id="VSP_016697" description="In isoform 2." evidence="7">
    <location>
        <begin position="1568"/>
        <end position="1580"/>
    </location>
</feature>
<feature type="splice variant" id="VSP_016698" description="In isoform 3." evidence="8">
    <original>PQESPPASSSSSQAAQPVSSHVETASQGHVGSQPRSAPSSSKRKSRKLAVNFSVSKPSE</original>
    <variation>EFPGWVHLPVTSLTYGLWWRLPG</variation>
    <location>
        <begin position="1661"/>
        <end position="1719"/>
    </location>
</feature>
<feature type="sequence conflict" description="In Ref. 1; BAA21563." evidence="9" ref="1">
    <original>G</original>
    <variation>A</variation>
    <location>
        <position position="99"/>
    </location>
</feature>
<feature type="sequence conflict" description="In Ref. 3; BAE25024." evidence="9" ref="3">
    <original>E</original>
    <variation>D</variation>
    <location>
        <position position="172"/>
    </location>
</feature>
<feature type="sequence conflict" description="In Ref. 3; BAE25024." evidence="9" ref="3">
    <original>D</original>
    <variation>G</variation>
    <location>
        <position position="193"/>
    </location>
</feature>
<feature type="sequence conflict" description="In Ref. 1; BAA21563." evidence="9" ref="1">
    <original>M</original>
    <variation>L</variation>
    <location>
        <position position="1085"/>
    </location>
</feature>
<feature type="sequence conflict" description="In Ref. 1; BAA21563." evidence="9" ref="1">
    <original>T</original>
    <variation>I</variation>
    <location>
        <position position="1243"/>
    </location>
</feature>
<feature type="sequence conflict" description="In Ref. 3; BAE41404." evidence="9" ref="3">
    <original>I</original>
    <variation>L</variation>
    <location>
        <position position="1261"/>
    </location>
</feature>
<sequence length="1719" mass="194307">MGVPKFYRWISERYPCLSEVVKEHQIPEFDNLYLDMNGIIHQCSHPNDDDVHFRISDDKIFTDIFHYLEVLFRIIKPRKVFFMAVDGVAPRAKMNQQRGRRFRSAKEAEDKIKKAIEKGETLPTEARFDSNCITPGTEFMARLHEHLKYFVNMKISTDKSWQGVTIYFSGHETPGEGEHKIMEFIRSEKAKPDHDPNTRHCLYGLDADLIMLGLTSHEAHFSLLREEVRFGGKKTQRVCAPEETTFHLLHLSLMREYIDYEFSALKEKITFKYDIEKIIDDWILMGFLVGNDFIPHLPHLHINHDALPLLYGTYIAILPELGGYINESGHLNLPRFERYLVKLSDFDREHFSEVFVDLKWFESKVGNKYLNEAAGAAAEEAKNCKEKRKPKGQENSLSWAALDKSEGEGVASRDNFEDETEDDDLFETEFRQYKRTYYMTKMGVDVVSDEFLANQAACYVQAIQWILHYYYHGVQSWSWYYPYHYAPFLSDIRSISTLKIHFELGKPFKPFEQLLAVLPSASKNLLPTCYQHLMTSEDSPIIEYYPPDFKTDLNGKQQEWEAVVLIPFIDETRLLEAMETCNHSLKKEERKRNQHSECLMCWYDRDTEFTYSSPWPEKFPAIERCCTRYKMISLDAWRVDINKNKITRVDQKALYFCGFPTLKHIKHKFFLKKSGVQVFQQSSRGENLMLEISVNAEPDELRIENIASAVLGKAVFVNWPHLEEARVVAVSDGETKFYIEEPPGTQKVYLGKTAPPSKVIQLTDKEQSNWTKEIQGISEQYLRRKGIIINETSAVVYAQLLTGRKYQISQNGEVRLEKQWSKQILPFVYQTIVKDIRAFDSRFSNIKTLDDLFPPRTMVFMLGTPYYGCTGEVQDSGDLITEGRIRVVFSIPCEPNLDALIQNQHKYSIKYNPGYVLAGRLGVSGYLVSRFTGSIFIGRGSRRNPHGDHKANVGLNLKFNKKNEEVPGYTKKVGNEWMYSSAAEQLLAEYIERAPELFSYIAKNSQEDVFYEDDIWPGENENGAEKVQEIITWLKGHPVSTLSRSSCDLHILDAAIVEKIEEEVEKCKQRKSNKKVRVTVKPHLMYRPLEQQHGVIPDRDAEFRLFDRVVNVRESFSVPVGLRGTVIGIKGASREADVLFEVLFDEEFPGGLTIRCSPGRGYRLPTSALVNLSHGSRCETGNQKLTAIVKPQPSVSHCSAAPSGHLGGLNHSPQSPFLPTQVPTKGDDEFCNIWQSLQGAGKTQHLQPTVQEKGAVLPQEISQVTEGHKSGFTDHSVRHQQRKHDSQRKFKEEYKSPKAECQSQKLSSKQTSGGSARCSIKLLKRNESPGTSEAQKVVTSYPNAVHKPPSGIENFLASLNLSKENEAQLPHHGEPPDEADLSPQSFAMKGTRMLKEILKIDSPDTRDSKNDMKKSDNEATVSSRRDERGVSAHPKPTCHMNKPHGTNEFQNVASVDSVCWPGQMPPVSTPVTELSRICSLVGMPQPDFSFLRTTQTMTVCQVKLSNGLLVHGPQCHSESEAKERAALFALQQLGSLGVSFPLPPPIFTNYPPAVPPGAVPPVFTQPTANIMPSSSHLFGSVSWRPPVPVAGNAFHYPSYPGTMPLAGGVPGGVHSQFIPLQVTKKRVANRKNFENKEAQSSQATPLQTNKPGSSEATKMTPQESPPASSSSSQAAQPVSSHVETASQGHVGSQPRSAPSSSKRKSRKLAVNFSVSKPSE</sequence>
<reference key="1">
    <citation type="journal article" date="1997" name="Gene">
        <title>Cloning and characterization of mouse Dhm2 cDNA, a functional homolog of budding yeast SEP1.</title>
        <authorList>
            <person name="Shobuike T."/>
            <person name="Sugano S."/>
            <person name="Yamashita T."/>
            <person name="Ikeda H."/>
        </authorList>
    </citation>
    <scope>NUCLEOTIDE SEQUENCE [MRNA] (ISOFORM 3)</scope>
    <scope>TISSUE SPECIFICITY</scope>
</reference>
<reference key="2">
    <citation type="journal article" date="1997" name="J. Cell Biol.">
        <title>A mouse cytoplasmic exoribonuclease (mXRN1) with preference for G4 tetraplex substrates.</title>
        <authorList>
            <person name="Bashkirov V.I."/>
            <person name="Scherthan H."/>
            <person name="Solinger J.A."/>
            <person name="Buerstedde J.-M."/>
            <person name="Heyer W.-D."/>
        </authorList>
    </citation>
    <scope>NUCLEOTIDE SEQUENCE [MRNA] (ISOFORMS 1 AND 2)</scope>
    <scope>FUNCTION IN RNA DECAY</scope>
    <scope>DNA-BINDING</scope>
    <scope>RNA-BINDING</scope>
    <scope>TISSUE SPECIFICITY</scope>
    <scope>SUBCELLULAR LOCATION</scope>
    <source>
        <strain>BALB/cJ</strain>
        <tissue>Testis</tissue>
    </source>
</reference>
<reference key="3">
    <citation type="journal article" date="2005" name="Science">
        <title>The transcriptional landscape of the mammalian genome.</title>
        <authorList>
            <person name="Carninci P."/>
            <person name="Kasukawa T."/>
            <person name="Katayama S."/>
            <person name="Gough J."/>
            <person name="Frith M.C."/>
            <person name="Maeda N."/>
            <person name="Oyama R."/>
            <person name="Ravasi T."/>
            <person name="Lenhard B."/>
            <person name="Wells C."/>
            <person name="Kodzius R."/>
            <person name="Shimokawa K."/>
            <person name="Bajic V.B."/>
            <person name="Brenner S.E."/>
            <person name="Batalov S."/>
            <person name="Forrest A.R."/>
            <person name="Zavolan M."/>
            <person name="Davis M.J."/>
            <person name="Wilming L.G."/>
            <person name="Aidinis V."/>
            <person name="Allen J.E."/>
            <person name="Ambesi-Impiombato A."/>
            <person name="Apweiler R."/>
            <person name="Aturaliya R.N."/>
            <person name="Bailey T.L."/>
            <person name="Bansal M."/>
            <person name="Baxter L."/>
            <person name="Beisel K.W."/>
            <person name="Bersano T."/>
            <person name="Bono H."/>
            <person name="Chalk A.M."/>
            <person name="Chiu K.P."/>
            <person name="Choudhary V."/>
            <person name="Christoffels A."/>
            <person name="Clutterbuck D.R."/>
            <person name="Crowe M.L."/>
            <person name="Dalla E."/>
            <person name="Dalrymple B.P."/>
            <person name="de Bono B."/>
            <person name="Della Gatta G."/>
            <person name="di Bernardo D."/>
            <person name="Down T."/>
            <person name="Engstrom P."/>
            <person name="Fagiolini M."/>
            <person name="Faulkner G."/>
            <person name="Fletcher C.F."/>
            <person name="Fukushima T."/>
            <person name="Furuno M."/>
            <person name="Futaki S."/>
            <person name="Gariboldi M."/>
            <person name="Georgii-Hemming P."/>
            <person name="Gingeras T.R."/>
            <person name="Gojobori T."/>
            <person name="Green R.E."/>
            <person name="Gustincich S."/>
            <person name="Harbers M."/>
            <person name="Hayashi Y."/>
            <person name="Hensch T.K."/>
            <person name="Hirokawa N."/>
            <person name="Hill D."/>
            <person name="Huminiecki L."/>
            <person name="Iacono M."/>
            <person name="Ikeo K."/>
            <person name="Iwama A."/>
            <person name="Ishikawa T."/>
            <person name="Jakt M."/>
            <person name="Kanapin A."/>
            <person name="Katoh M."/>
            <person name="Kawasawa Y."/>
            <person name="Kelso J."/>
            <person name="Kitamura H."/>
            <person name="Kitano H."/>
            <person name="Kollias G."/>
            <person name="Krishnan S.P."/>
            <person name="Kruger A."/>
            <person name="Kummerfeld S.K."/>
            <person name="Kurochkin I.V."/>
            <person name="Lareau L.F."/>
            <person name="Lazarevic D."/>
            <person name="Lipovich L."/>
            <person name="Liu J."/>
            <person name="Liuni S."/>
            <person name="McWilliam S."/>
            <person name="Madan Babu M."/>
            <person name="Madera M."/>
            <person name="Marchionni L."/>
            <person name="Matsuda H."/>
            <person name="Matsuzawa S."/>
            <person name="Miki H."/>
            <person name="Mignone F."/>
            <person name="Miyake S."/>
            <person name="Morris K."/>
            <person name="Mottagui-Tabar S."/>
            <person name="Mulder N."/>
            <person name="Nakano N."/>
            <person name="Nakauchi H."/>
            <person name="Ng P."/>
            <person name="Nilsson R."/>
            <person name="Nishiguchi S."/>
            <person name="Nishikawa S."/>
            <person name="Nori F."/>
            <person name="Ohara O."/>
            <person name="Okazaki Y."/>
            <person name="Orlando V."/>
            <person name="Pang K.C."/>
            <person name="Pavan W.J."/>
            <person name="Pavesi G."/>
            <person name="Pesole G."/>
            <person name="Petrovsky N."/>
            <person name="Piazza S."/>
            <person name="Reed J."/>
            <person name="Reid J.F."/>
            <person name="Ring B.Z."/>
            <person name="Ringwald M."/>
            <person name="Rost B."/>
            <person name="Ruan Y."/>
            <person name="Salzberg S.L."/>
            <person name="Sandelin A."/>
            <person name="Schneider C."/>
            <person name="Schoenbach C."/>
            <person name="Sekiguchi K."/>
            <person name="Semple C.A."/>
            <person name="Seno S."/>
            <person name="Sessa L."/>
            <person name="Sheng Y."/>
            <person name="Shibata Y."/>
            <person name="Shimada H."/>
            <person name="Shimada K."/>
            <person name="Silva D."/>
            <person name="Sinclair B."/>
            <person name="Sperling S."/>
            <person name="Stupka E."/>
            <person name="Sugiura K."/>
            <person name="Sultana R."/>
            <person name="Takenaka Y."/>
            <person name="Taki K."/>
            <person name="Tammoja K."/>
            <person name="Tan S.L."/>
            <person name="Tang S."/>
            <person name="Taylor M.S."/>
            <person name="Tegner J."/>
            <person name="Teichmann S.A."/>
            <person name="Ueda H.R."/>
            <person name="van Nimwegen E."/>
            <person name="Verardo R."/>
            <person name="Wei C.L."/>
            <person name="Yagi K."/>
            <person name="Yamanishi H."/>
            <person name="Zabarovsky E."/>
            <person name="Zhu S."/>
            <person name="Zimmer A."/>
            <person name="Hide W."/>
            <person name="Bult C."/>
            <person name="Grimmond S.M."/>
            <person name="Teasdale R.D."/>
            <person name="Liu E.T."/>
            <person name="Brusic V."/>
            <person name="Quackenbush J."/>
            <person name="Wahlestedt C."/>
            <person name="Mattick J.S."/>
            <person name="Hume D.A."/>
            <person name="Kai C."/>
            <person name="Sasaki D."/>
            <person name="Tomaru Y."/>
            <person name="Fukuda S."/>
            <person name="Kanamori-Katayama M."/>
            <person name="Suzuki M."/>
            <person name="Aoki J."/>
            <person name="Arakawa T."/>
            <person name="Iida J."/>
            <person name="Imamura K."/>
            <person name="Itoh M."/>
            <person name="Kato T."/>
            <person name="Kawaji H."/>
            <person name="Kawagashira N."/>
            <person name="Kawashima T."/>
            <person name="Kojima M."/>
            <person name="Kondo S."/>
            <person name="Konno H."/>
            <person name="Nakano K."/>
            <person name="Ninomiya N."/>
            <person name="Nishio T."/>
            <person name="Okada M."/>
            <person name="Plessy C."/>
            <person name="Shibata K."/>
            <person name="Shiraki T."/>
            <person name="Suzuki S."/>
            <person name="Tagami M."/>
            <person name="Waki K."/>
            <person name="Watahiki A."/>
            <person name="Okamura-Oho Y."/>
            <person name="Suzuki H."/>
            <person name="Kawai J."/>
            <person name="Hayashizaki Y."/>
        </authorList>
    </citation>
    <scope>NUCLEOTIDE SEQUENCE [LARGE SCALE MRNA] OF 1-778</scope>
    <scope>NUCLEOTIDE SEQUENCE [LARGE SCALE MRNA] OF 1261-1719 (ISOFORM 1)</scope>
    <source>
        <strain>C57BL/6J</strain>
        <strain>NOD</strain>
        <tissue>Heart</tissue>
        <tissue>Hypothalamus</tissue>
        <tissue>Thymus</tissue>
    </source>
</reference>
<reference key="4">
    <citation type="journal article" date="2003" name="Neuroscience">
        <title>Identification of human SEP1 as a glial cell line-derived neurotrophic factor-inducible protein and its expression in the nervous system.</title>
        <authorList>
            <person name="Shimoyama Y."/>
            <person name="Morikawa Y."/>
            <person name="Ichihara M."/>
            <person name="Kodama Y."/>
            <person name="Fukuda N."/>
            <person name="Hayashi H."/>
            <person name="Morinaga T."/>
            <person name="Iwashita T."/>
            <person name="Murakumo Y."/>
            <person name="Takahashi M."/>
        </authorList>
    </citation>
    <scope>ASSOCIATION WITH ALPHA AND BETA TUBULINS</scope>
    <scope>DEVELOPMENTAL STAGE</scope>
    <scope>TISSUE SPECIFICITY</scope>
</reference>
<reference key="5">
    <citation type="journal article" date="2009" name="Immunity">
        <title>The phagosomal proteome in interferon-gamma-activated macrophages.</title>
        <authorList>
            <person name="Trost M."/>
            <person name="English L."/>
            <person name="Lemieux S."/>
            <person name="Courcelles M."/>
            <person name="Desjardins M."/>
            <person name="Thibault P."/>
        </authorList>
    </citation>
    <scope>PHOSPHORYLATION [LARGE SCALE ANALYSIS] AT SER-1382</scope>
    <scope>IDENTIFICATION BY MASS SPECTROMETRY [LARGE SCALE ANALYSIS]</scope>
</reference>
<reference key="6">
    <citation type="journal article" date="2010" name="Cell">
        <title>A tissue-specific atlas of mouse protein phosphorylation and expression.</title>
        <authorList>
            <person name="Huttlin E.L."/>
            <person name="Jedrychowski M.P."/>
            <person name="Elias J.E."/>
            <person name="Goswami T."/>
            <person name="Rad R."/>
            <person name="Beausoleil S.A."/>
            <person name="Villen J."/>
            <person name="Haas W."/>
            <person name="Sowa M.E."/>
            <person name="Gygi S.P."/>
        </authorList>
    </citation>
    <scope>IDENTIFICATION BY MASS SPECTROMETRY [LARGE SCALE ANALYSIS]</scope>
    <source>
        <tissue>Brain</tissue>
        <tissue>Lung</tissue>
        <tissue>Pancreas</tissue>
        <tissue>Spleen</tissue>
    </source>
</reference>
<reference key="7">
    <citation type="journal article" date="2017" name="Mol. Cell">
        <title>Regulation of m6A transcripts by the 3'-5' RNA helicase YTHDC2 is essential for a successful meiotic program in the mammalian germline.</title>
        <authorList>
            <person name="Wojtas M.N."/>
            <person name="Pandey R.R."/>
            <person name="Mendel M."/>
            <person name="Homolka D."/>
            <person name="Sachidanandam R."/>
            <person name="Pillai R.S."/>
        </authorList>
    </citation>
    <scope>INTERACTION WITH YTHDC2</scope>
</reference>
<dbReference type="EC" id="3.1.13.-"/>
<dbReference type="EMBL" id="D88026">
    <property type="protein sequence ID" value="BAA21563.1"/>
    <property type="molecule type" value="mRNA"/>
</dbReference>
<dbReference type="EMBL" id="X91617">
    <property type="protein sequence ID" value="CAA62819.1"/>
    <property type="molecule type" value="mRNA"/>
</dbReference>
<dbReference type="EMBL" id="X91617">
    <property type="protein sequence ID" value="CAA62820.1"/>
    <property type="molecule type" value="mRNA"/>
</dbReference>
<dbReference type="EMBL" id="AK142311">
    <property type="protein sequence ID" value="BAE25024.1"/>
    <property type="molecule type" value="mRNA"/>
</dbReference>
<dbReference type="EMBL" id="AK162848">
    <property type="protein sequence ID" value="BAE37081.1"/>
    <property type="molecule type" value="mRNA"/>
</dbReference>
<dbReference type="EMBL" id="AK169840">
    <property type="protein sequence ID" value="BAE41404.1"/>
    <property type="molecule type" value="mRNA"/>
</dbReference>
<dbReference type="CCDS" id="CCDS81053.1">
    <molecule id="P97789-1"/>
</dbReference>
<dbReference type="PIR" id="T30174">
    <property type="entry name" value="T30174"/>
</dbReference>
<dbReference type="PIR" id="T30175">
    <property type="entry name" value="T30175"/>
</dbReference>
<dbReference type="PIR" id="T30244">
    <property type="entry name" value="T30244"/>
</dbReference>
<dbReference type="SMR" id="P97789"/>
<dbReference type="BioGRID" id="204909">
    <property type="interactions" value="7"/>
</dbReference>
<dbReference type="FunCoup" id="P97789">
    <property type="interactions" value="3063"/>
</dbReference>
<dbReference type="IntAct" id="P97789">
    <property type="interactions" value="2"/>
</dbReference>
<dbReference type="STRING" id="10090.ENSMUSP00000034981"/>
<dbReference type="GlyGen" id="P97789">
    <property type="glycosylation" value="5 sites, 1 N-linked glycan (1 site), 1 O-linked glycan (4 sites)"/>
</dbReference>
<dbReference type="iPTMnet" id="P97789"/>
<dbReference type="PhosphoSitePlus" id="P97789"/>
<dbReference type="SwissPalm" id="P97789"/>
<dbReference type="PaxDb" id="10090-ENSMUSP00000034981"/>
<dbReference type="PeptideAtlas" id="P97789"/>
<dbReference type="ProteomicsDB" id="299783">
    <molecule id="P97789-1"/>
</dbReference>
<dbReference type="ProteomicsDB" id="299784">
    <molecule id="P97789-2"/>
</dbReference>
<dbReference type="ProteomicsDB" id="299785">
    <molecule id="P97789-3"/>
</dbReference>
<dbReference type="Pumba" id="P97789"/>
<dbReference type="AGR" id="MGI:891964"/>
<dbReference type="MGI" id="MGI:891964">
    <property type="gene designation" value="Xrn1"/>
</dbReference>
<dbReference type="eggNOG" id="KOG2045">
    <property type="taxonomic scope" value="Eukaryota"/>
</dbReference>
<dbReference type="InParanoid" id="P97789"/>
<dbReference type="OrthoDB" id="372487at2759"/>
<dbReference type="PhylomeDB" id="P97789"/>
<dbReference type="Reactome" id="R-MMU-450385">
    <property type="pathway name" value="Butyrate Response Factor 1 (BRF1) binds and destabilizes mRNA"/>
</dbReference>
<dbReference type="Reactome" id="R-MMU-450513">
    <property type="pathway name" value="Tristetraprolin (TTP, ZFP36) binds and destabilizes mRNA"/>
</dbReference>
<dbReference type="ChiTaRS" id="Xrn1">
    <property type="organism name" value="mouse"/>
</dbReference>
<dbReference type="PRO" id="PR:P97789"/>
<dbReference type="Proteomes" id="UP000000589">
    <property type="component" value="Unplaced"/>
</dbReference>
<dbReference type="RNAct" id="P97789">
    <property type="molecule type" value="protein"/>
</dbReference>
<dbReference type="GO" id="GO:0005737">
    <property type="term" value="C:cytoplasm"/>
    <property type="evidence" value="ECO:0000314"/>
    <property type="project" value="UniProtKB"/>
</dbReference>
<dbReference type="GO" id="GO:0000932">
    <property type="term" value="C:P-body"/>
    <property type="evidence" value="ECO:0000314"/>
    <property type="project" value="MGI"/>
</dbReference>
<dbReference type="GO" id="GO:0004534">
    <property type="term" value="F:5'-3' RNA exonuclease activity"/>
    <property type="evidence" value="ECO:0000314"/>
    <property type="project" value="BHF-UCL"/>
</dbReference>
<dbReference type="GO" id="GO:0051880">
    <property type="term" value="F:G-quadruplex DNA binding"/>
    <property type="evidence" value="ECO:0000314"/>
    <property type="project" value="BHF-UCL"/>
</dbReference>
<dbReference type="GO" id="GO:0002151">
    <property type="term" value="F:G-quadruplex RNA binding"/>
    <property type="evidence" value="ECO:0000314"/>
    <property type="project" value="BHF-UCL"/>
</dbReference>
<dbReference type="GO" id="GO:0071044">
    <property type="term" value="P:histone mRNA catabolic process"/>
    <property type="evidence" value="ECO:0000250"/>
    <property type="project" value="UniProtKB"/>
</dbReference>
<dbReference type="GO" id="GO:0051321">
    <property type="term" value="P:meiotic cell cycle"/>
    <property type="evidence" value="ECO:0000303"/>
    <property type="project" value="UniProtKB"/>
</dbReference>
<dbReference type="GO" id="GO:0006396">
    <property type="term" value="P:RNA processing"/>
    <property type="evidence" value="ECO:0000304"/>
    <property type="project" value="UniProtKB"/>
</dbReference>
<dbReference type="GO" id="GO:0000723">
    <property type="term" value="P:telomere maintenance"/>
    <property type="evidence" value="ECO:0000303"/>
    <property type="project" value="UniProtKB"/>
</dbReference>
<dbReference type="CDD" id="cd18673">
    <property type="entry name" value="PIN_XRN1-2-like"/>
    <property type="match status" value="1"/>
</dbReference>
<dbReference type="FunFam" id="1.25.40.1050:FF:000001">
    <property type="entry name" value="5'-3' exoribonuclease 1"/>
    <property type="match status" value="1"/>
</dbReference>
<dbReference type="FunFam" id="2.30.30.750:FF:000001">
    <property type="entry name" value="5'-3' exoribonuclease 1"/>
    <property type="match status" value="1"/>
</dbReference>
<dbReference type="FunFam" id="3.40.50.12390:FF:000002">
    <property type="entry name" value="5'-3' exoribonuclease 1"/>
    <property type="match status" value="1"/>
</dbReference>
<dbReference type="Gene3D" id="1.25.40.1050">
    <property type="match status" value="1"/>
</dbReference>
<dbReference type="Gene3D" id="2.170.260.40">
    <property type="match status" value="1"/>
</dbReference>
<dbReference type="Gene3D" id="2.30.30.750">
    <property type="match status" value="1"/>
</dbReference>
<dbReference type="Gene3D" id="3.40.50.12390">
    <property type="match status" value="1"/>
</dbReference>
<dbReference type="InterPro" id="IPR027073">
    <property type="entry name" value="5_3_exoribonuclease"/>
</dbReference>
<dbReference type="InterPro" id="IPR016494">
    <property type="entry name" value="5_3_exoribonuclease_1"/>
</dbReference>
<dbReference type="InterPro" id="IPR041385">
    <property type="entry name" value="SH3_12"/>
</dbReference>
<dbReference type="InterPro" id="IPR040992">
    <property type="entry name" value="XRN1_D1"/>
</dbReference>
<dbReference type="InterPro" id="IPR047007">
    <property type="entry name" value="XRN1_D1_sf"/>
</dbReference>
<dbReference type="InterPro" id="IPR041106">
    <property type="entry name" value="XRN1_D2_D3"/>
</dbReference>
<dbReference type="InterPro" id="IPR041412">
    <property type="entry name" value="Xrn1_helical"/>
</dbReference>
<dbReference type="InterPro" id="IPR004859">
    <property type="entry name" value="Xrn1_N"/>
</dbReference>
<dbReference type="InterPro" id="IPR047008">
    <property type="entry name" value="XRN1_SH3_sf"/>
</dbReference>
<dbReference type="PANTHER" id="PTHR12341:SF7">
    <property type="entry name" value="5'-3' EXORIBONUCLEASE 1"/>
    <property type="match status" value="1"/>
</dbReference>
<dbReference type="PANTHER" id="PTHR12341">
    <property type="entry name" value="5'-&gt;3' EXORIBONUCLEASE"/>
    <property type="match status" value="1"/>
</dbReference>
<dbReference type="Pfam" id="PF18129">
    <property type="entry name" value="SH3_12"/>
    <property type="match status" value="1"/>
</dbReference>
<dbReference type="Pfam" id="PF18332">
    <property type="entry name" value="XRN1_D1"/>
    <property type="match status" value="1"/>
</dbReference>
<dbReference type="Pfam" id="PF18334">
    <property type="entry name" value="XRN1_D2_D3"/>
    <property type="match status" value="1"/>
</dbReference>
<dbReference type="Pfam" id="PF17846">
    <property type="entry name" value="XRN_M"/>
    <property type="match status" value="1"/>
</dbReference>
<dbReference type="Pfam" id="PF03159">
    <property type="entry name" value="XRN_N"/>
    <property type="match status" value="1"/>
</dbReference>
<dbReference type="PIRSF" id="PIRSF006743">
    <property type="entry name" value="Exonuclease_Xnr1"/>
    <property type="match status" value="1"/>
</dbReference>
<dbReference type="SUPFAM" id="SSF54768">
    <property type="entry name" value="dsRNA-binding domain-like"/>
    <property type="match status" value="1"/>
</dbReference>
<organism>
    <name type="scientific">Mus musculus</name>
    <name type="common">Mouse</name>
    <dbReference type="NCBI Taxonomy" id="10090"/>
    <lineage>
        <taxon>Eukaryota</taxon>
        <taxon>Metazoa</taxon>
        <taxon>Chordata</taxon>
        <taxon>Craniata</taxon>
        <taxon>Vertebrata</taxon>
        <taxon>Euteleostomi</taxon>
        <taxon>Mammalia</taxon>
        <taxon>Eutheria</taxon>
        <taxon>Euarchontoglires</taxon>
        <taxon>Glires</taxon>
        <taxon>Rodentia</taxon>
        <taxon>Myomorpha</taxon>
        <taxon>Muroidea</taxon>
        <taxon>Muridae</taxon>
        <taxon>Murinae</taxon>
        <taxon>Mus</taxon>
        <taxon>Mus</taxon>
    </lineage>
</organism>
<accession>P97789</accession>
<accession>O35651</accession>
<accession>P97790</accession>
<accession>Q3TE44</accession>
<accession>Q3TRE9</accession>
<accession>Q3UQL5</accession>
<keyword id="KW-0025">Alternative splicing</keyword>
<keyword id="KW-0963">Cytoplasm</keyword>
<keyword id="KW-0238">DNA-binding</keyword>
<keyword id="KW-0269">Exonuclease</keyword>
<keyword id="KW-0378">Hydrolase</keyword>
<keyword id="KW-0540">Nuclease</keyword>
<keyword id="KW-0597">Phosphoprotein</keyword>
<keyword id="KW-1185">Reference proteome</keyword>
<keyword id="KW-0694">RNA-binding</keyword>